<feature type="chain" id="PRO_1000212862" description="Ribonuclease P protein component 4">
    <location>
        <begin position="1"/>
        <end position="104"/>
    </location>
</feature>
<feature type="binding site" evidence="1">
    <location>
        <position position="57"/>
    </location>
    <ligand>
        <name>Zn(2+)</name>
        <dbReference type="ChEBI" id="CHEBI:29105"/>
    </ligand>
</feature>
<feature type="binding site" evidence="1">
    <location>
        <position position="60"/>
    </location>
    <ligand>
        <name>Zn(2+)</name>
        <dbReference type="ChEBI" id="CHEBI:29105"/>
    </ligand>
</feature>
<feature type="binding site" evidence="1">
    <location>
        <position position="83"/>
    </location>
    <ligand>
        <name>Zn(2+)</name>
        <dbReference type="ChEBI" id="CHEBI:29105"/>
    </ligand>
</feature>
<feature type="binding site" evidence="1">
    <location>
        <position position="86"/>
    </location>
    <ligand>
        <name>Zn(2+)</name>
        <dbReference type="ChEBI" id="CHEBI:29105"/>
    </ligand>
</feature>
<protein>
    <recommendedName>
        <fullName evidence="1">Ribonuclease P protein component 4</fullName>
        <shortName evidence="1">RNase P component 4</shortName>
        <ecNumber evidence="1">3.1.26.5</ecNumber>
    </recommendedName>
    <alternativeName>
        <fullName evidence="1">Rpp21</fullName>
    </alternativeName>
</protein>
<accession>C3MZY6</accession>
<proteinExistence type="inferred from homology"/>
<dbReference type="EC" id="3.1.26.5" evidence="1"/>
<dbReference type="EMBL" id="CP001401">
    <property type="protein sequence ID" value="ACP54071.1"/>
    <property type="molecule type" value="Genomic_DNA"/>
</dbReference>
<dbReference type="RefSeq" id="WP_012718323.1">
    <property type="nucleotide sequence ID" value="NC_012632.1"/>
</dbReference>
<dbReference type="SMR" id="C3MZY6"/>
<dbReference type="KEGG" id="sim:M1627_0042"/>
<dbReference type="HOGENOM" id="CLU_079140_3_1_2"/>
<dbReference type="Proteomes" id="UP000002307">
    <property type="component" value="Chromosome"/>
</dbReference>
<dbReference type="GO" id="GO:0005737">
    <property type="term" value="C:cytoplasm"/>
    <property type="evidence" value="ECO:0007669"/>
    <property type="project" value="UniProtKB-SubCell"/>
</dbReference>
<dbReference type="GO" id="GO:0030677">
    <property type="term" value="C:ribonuclease P complex"/>
    <property type="evidence" value="ECO:0007669"/>
    <property type="project" value="UniProtKB-UniRule"/>
</dbReference>
<dbReference type="GO" id="GO:0004526">
    <property type="term" value="F:ribonuclease P activity"/>
    <property type="evidence" value="ECO:0007669"/>
    <property type="project" value="UniProtKB-UniRule"/>
</dbReference>
<dbReference type="GO" id="GO:0008270">
    <property type="term" value="F:zinc ion binding"/>
    <property type="evidence" value="ECO:0007669"/>
    <property type="project" value="UniProtKB-UniRule"/>
</dbReference>
<dbReference type="GO" id="GO:0001682">
    <property type="term" value="P:tRNA 5'-leader removal"/>
    <property type="evidence" value="ECO:0007669"/>
    <property type="project" value="UniProtKB-UniRule"/>
</dbReference>
<dbReference type="Gene3D" id="6.20.50.20">
    <property type="match status" value="1"/>
</dbReference>
<dbReference type="Gene3D" id="1.20.5.420">
    <property type="entry name" value="Immunoglobulin FC, subunit C"/>
    <property type="match status" value="1"/>
</dbReference>
<dbReference type="HAMAP" id="MF_00757">
    <property type="entry name" value="RNase_P_4"/>
    <property type="match status" value="1"/>
</dbReference>
<dbReference type="InterPro" id="IPR016432">
    <property type="entry name" value="RNP4"/>
</dbReference>
<dbReference type="InterPro" id="IPR007175">
    <property type="entry name" value="Rpr2/Snm1/Rpp21"/>
</dbReference>
<dbReference type="PANTHER" id="PTHR14742:SF0">
    <property type="entry name" value="RIBONUCLEASE P PROTEIN SUBUNIT P21"/>
    <property type="match status" value="1"/>
</dbReference>
<dbReference type="PANTHER" id="PTHR14742">
    <property type="entry name" value="RIBONUCLEASE P SUBUNIT P21"/>
    <property type="match status" value="1"/>
</dbReference>
<dbReference type="Pfam" id="PF04032">
    <property type="entry name" value="Rpr2"/>
    <property type="match status" value="1"/>
</dbReference>
<dbReference type="PIRSF" id="PIRSF004878">
    <property type="entry name" value="RNase_P_4"/>
    <property type="match status" value="1"/>
</dbReference>
<reference key="1">
    <citation type="journal article" date="2009" name="Proc. Natl. Acad. Sci. U.S.A.">
        <title>Biogeography of the Sulfolobus islandicus pan-genome.</title>
        <authorList>
            <person name="Reno M.L."/>
            <person name="Held N.L."/>
            <person name="Fields C.J."/>
            <person name="Burke P.V."/>
            <person name="Whitaker R.J."/>
        </authorList>
    </citation>
    <scope>NUCLEOTIDE SEQUENCE [LARGE SCALE GENOMIC DNA]</scope>
    <source>
        <strain>M.16.27</strain>
    </source>
</reference>
<evidence type="ECO:0000255" key="1">
    <source>
        <dbReference type="HAMAP-Rule" id="MF_00757"/>
    </source>
</evidence>
<sequence>MRIKNKIKKRIIELIDLAYITARKGDLELAREYIKLAEMYSRKGRVKIPLKYKRMFCRKCYTPLITGVTERRRIRSKILIRTCLICNWQRRYVLSRNKGSNKEN</sequence>
<organism>
    <name type="scientific">Saccharolobus islandicus (strain M.16.27)</name>
    <name type="common">Sulfolobus islandicus</name>
    <dbReference type="NCBI Taxonomy" id="427318"/>
    <lineage>
        <taxon>Archaea</taxon>
        <taxon>Thermoproteota</taxon>
        <taxon>Thermoprotei</taxon>
        <taxon>Sulfolobales</taxon>
        <taxon>Sulfolobaceae</taxon>
        <taxon>Saccharolobus</taxon>
    </lineage>
</organism>
<comment type="function">
    <text evidence="1">Part of ribonuclease P, a protein complex that generates mature tRNA molecules by cleaving their 5'-ends.</text>
</comment>
<comment type="catalytic activity">
    <reaction evidence="1">
        <text>Endonucleolytic cleavage of RNA, removing 5'-extranucleotides from tRNA precursor.</text>
        <dbReference type="EC" id="3.1.26.5"/>
    </reaction>
</comment>
<comment type="cofactor">
    <cofactor evidence="1">
        <name>Zn(2+)</name>
        <dbReference type="ChEBI" id="CHEBI:29105"/>
    </cofactor>
    <text evidence="1">Binds 1 zinc ion per subunit.</text>
</comment>
<comment type="subunit">
    <text evidence="1">Consists of a catalytic RNA component and at least 4-5 protein subunits.</text>
</comment>
<comment type="subcellular location">
    <subcellularLocation>
        <location evidence="1">Cytoplasm</location>
    </subcellularLocation>
</comment>
<comment type="similarity">
    <text evidence="1">Belongs to the eukaryotic/archaeal RNase P protein component 4 family.</text>
</comment>
<keyword id="KW-0963">Cytoplasm</keyword>
<keyword id="KW-0255">Endonuclease</keyword>
<keyword id="KW-0378">Hydrolase</keyword>
<keyword id="KW-0479">Metal-binding</keyword>
<keyword id="KW-0540">Nuclease</keyword>
<keyword id="KW-0819">tRNA processing</keyword>
<keyword id="KW-0862">Zinc</keyword>
<gene>
    <name evidence="1" type="primary">rnp4</name>
    <name type="ordered locus">M1627_0042</name>
</gene>
<name>RNP4_SACI3</name>